<comment type="similarity">
    <text evidence="1">Belongs to the bacterial ribosomal protein bL36 family.</text>
</comment>
<accession>Q1GNR9</accession>
<name>RL36_SPHAL</name>
<proteinExistence type="inferred from homology"/>
<evidence type="ECO:0000255" key="1">
    <source>
        <dbReference type="HAMAP-Rule" id="MF_00251"/>
    </source>
</evidence>
<evidence type="ECO:0000305" key="2"/>
<dbReference type="EMBL" id="CP000356">
    <property type="protein sequence ID" value="ABF54703.1"/>
    <property type="molecule type" value="Genomic_DNA"/>
</dbReference>
<dbReference type="SMR" id="Q1GNR9"/>
<dbReference type="STRING" id="317655.Sala_2998"/>
<dbReference type="KEGG" id="sal:Sala_2998"/>
<dbReference type="eggNOG" id="COG0257">
    <property type="taxonomic scope" value="Bacteria"/>
</dbReference>
<dbReference type="HOGENOM" id="CLU_135723_3_2_5"/>
<dbReference type="Proteomes" id="UP000006578">
    <property type="component" value="Chromosome"/>
</dbReference>
<dbReference type="GO" id="GO:1990904">
    <property type="term" value="C:ribonucleoprotein complex"/>
    <property type="evidence" value="ECO:0007669"/>
    <property type="project" value="UniProtKB-KW"/>
</dbReference>
<dbReference type="GO" id="GO:0005840">
    <property type="term" value="C:ribosome"/>
    <property type="evidence" value="ECO:0007669"/>
    <property type="project" value="UniProtKB-KW"/>
</dbReference>
<dbReference type="GO" id="GO:0003735">
    <property type="term" value="F:structural constituent of ribosome"/>
    <property type="evidence" value="ECO:0007669"/>
    <property type="project" value="InterPro"/>
</dbReference>
<dbReference type="GO" id="GO:0006412">
    <property type="term" value="P:translation"/>
    <property type="evidence" value="ECO:0007669"/>
    <property type="project" value="UniProtKB-UniRule"/>
</dbReference>
<dbReference type="HAMAP" id="MF_00251">
    <property type="entry name" value="Ribosomal_bL36"/>
    <property type="match status" value="1"/>
</dbReference>
<dbReference type="InterPro" id="IPR000473">
    <property type="entry name" value="Ribosomal_bL36"/>
</dbReference>
<dbReference type="InterPro" id="IPR035977">
    <property type="entry name" value="Ribosomal_bL36_sp"/>
</dbReference>
<dbReference type="InterPro" id="IPR047621">
    <property type="entry name" value="Ribosomal_L36_bact"/>
</dbReference>
<dbReference type="NCBIfam" id="NF002021">
    <property type="entry name" value="PRK00831.1"/>
    <property type="match status" value="1"/>
</dbReference>
<dbReference type="NCBIfam" id="TIGR01022">
    <property type="entry name" value="rpmJ_bact"/>
    <property type="match status" value="1"/>
</dbReference>
<dbReference type="PANTHER" id="PTHR47781">
    <property type="entry name" value="50S RIBOSOMAL PROTEIN L36 2"/>
    <property type="match status" value="1"/>
</dbReference>
<dbReference type="PANTHER" id="PTHR47781:SF1">
    <property type="entry name" value="LARGE RIBOSOMAL SUBUNIT PROTEIN BL36B"/>
    <property type="match status" value="1"/>
</dbReference>
<dbReference type="Pfam" id="PF00444">
    <property type="entry name" value="Ribosomal_L36"/>
    <property type="match status" value="1"/>
</dbReference>
<dbReference type="SUPFAM" id="SSF57840">
    <property type="entry name" value="Ribosomal protein L36"/>
    <property type="match status" value="1"/>
</dbReference>
<protein>
    <recommendedName>
        <fullName evidence="1">Large ribosomal subunit protein bL36</fullName>
    </recommendedName>
    <alternativeName>
        <fullName evidence="2">50S ribosomal protein L36</fullName>
    </alternativeName>
</protein>
<organism>
    <name type="scientific">Sphingopyxis alaskensis (strain DSM 13593 / LMG 18877 / RB2256)</name>
    <name type="common">Sphingomonas alaskensis</name>
    <dbReference type="NCBI Taxonomy" id="317655"/>
    <lineage>
        <taxon>Bacteria</taxon>
        <taxon>Pseudomonadati</taxon>
        <taxon>Pseudomonadota</taxon>
        <taxon>Alphaproteobacteria</taxon>
        <taxon>Sphingomonadales</taxon>
        <taxon>Sphingomonadaceae</taxon>
        <taxon>Sphingopyxis</taxon>
    </lineage>
</organism>
<reference key="1">
    <citation type="journal article" date="2009" name="Proc. Natl. Acad. Sci. U.S.A.">
        <title>The genomic basis of trophic strategy in marine bacteria.</title>
        <authorList>
            <person name="Lauro F.M."/>
            <person name="McDougald D."/>
            <person name="Thomas T."/>
            <person name="Williams T.J."/>
            <person name="Egan S."/>
            <person name="Rice S."/>
            <person name="DeMaere M.Z."/>
            <person name="Ting L."/>
            <person name="Ertan H."/>
            <person name="Johnson J."/>
            <person name="Ferriera S."/>
            <person name="Lapidus A."/>
            <person name="Anderson I."/>
            <person name="Kyrpides N."/>
            <person name="Munk A.C."/>
            <person name="Detter C."/>
            <person name="Han C.S."/>
            <person name="Brown M.V."/>
            <person name="Robb F.T."/>
            <person name="Kjelleberg S."/>
            <person name="Cavicchioli R."/>
        </authorList>
    </citation>
    <scope>NUCLEOTIDE SEQUENCE [LARGE SCALE GENOMIC DNA]</scope>
    <source>
        <strain>DSM 13593 / LMG 18877 / RB2256</strain>
    </source>
</reference>
<keyword id="KW-1185">Reference proteome</keyword>
<keyword id="KW-0687">Ribonucleoprotein</keyword>
<keyword id="KW-0689">Ribosomal protein</keyword>
<gene>
    <name evidence="1" type="primary">rpmJ</name>
    <name type="ordered locus">Sala_2998</name>
</gene>
<feature type="chain" id="PRO_0000302302" description="Large ribosomal subunit protein bL36">
    <location>
        <begin position="1"/>
        <end position="41"/>
    </location>
</feature>
<sequence>MKIRNSLKSLKDRHRDNRVIRRRGRTYVINKTNRRFKARQG</sequence>